<name>UREF_PARC0</name>
<dbReference type="EMBL" id="CP000512">
    <property type="protein sequence ID" value="ABM34087.1"/>
    <property type="molecule type" value="Genomic_DNA"/>
</dbReference>
<dbReference type="RefSeq" id="WP_011796584.1">
    <property type="nucleotide sequence ID" value="NC_008752.1"/>
</dbReference>
<dbReference type="SMR" id="A1TSZ9"/>
<dbReference type="STRING" id="397945.Aave_3532"/>
<dbReference type="GeneID" id="79791584"/>
<dbReference type="KEGG" id="aav:Aave_3532"/>
<dbReference type="eggNOG" id="COG0830">
    <property type="taxonomic scope" value="Bacteria"/>
</dbReference>
<dbReference type="HOGENOM" id="CLU_049215_2_1_4"/>
<dbReference type="OrthoDB" id="9798772at2"/>
<dbReference type="Proteomes" id="UP000002596">
    <property type="component" value="Chromosome"/>
</dbReference>
<dbReference type="GO" id="GO:0005737">
    <property type="term" value="C:cytoplasm"/>
    <property type="evidence" value="ECO:0007669"/>
    <property type="project" value="UniProtKB-SubCell"/>
</dbReference>
<dbReference type="GO" id="GO:0016151">
    <property type="term" value="F:nickel cation binding"/>
    <property type="evidence" value="ECO:0007669"/>
    <property type="project" value="UniProtKB-UniRule"/>
</dbReference>
<dbReference type="Gene3D" id="1.10.4190.10">
    <property type="entry name" value="Urease accessory protein UreF"/>
    <property type="match status" value="1"/>
</dbReference>
<dbReference type="HAMAP" id="MF_01385">
    <property type="entry name" value="UreF"/>
    <property type="match status" value="1"/>
</dbReference>
<dbReference type="InterPro" id="IPR002639">
    <property type="entry name" value="UreF"/>
</dbReference>
<dbReference type="InterPro" id="IPR038277">
    <property type="entry name" value="UreF_sf"/>
</dbReference>
<dbReference type="PANTHER" id="PTHR33620">
    <property type="entry name" value="UREASE ACCESSORY PROTEIN F"/>
    <property type="match status" value="1"/>
</dbReference>
<dbReference type="PANTHER" id="PTHR33620:SF1">
    <property type="entry name" value="UREASE ACCESSORY PROTEIN F"/>
    <property type="match status" value="1"/>
</dbReference>
<dbReference type="Pfam" id="PF01730">
    <property type="entry name" value="UreF"/>
    <property type="match status" value="1"/>
</dbReference>
<dbReference type="PIRSF" id="PIRSF009467">
    <property type="entry name" value="Ureas_acces_UreF"/>
    <property type="match status" value="1"/>
</dbReference>
<gene>
    <name evidence="1" type="primary">ureF</name>
    <name type="ordered locus">Aave_3532</name>
</gene>
<protein>
    <recommendedName>
        <fullName evidence="1">Urease accessory protein UreF</fullName>
    </recommendedName>
</protein>
<organism>
    <name type="scientific">Paracidovorax citrulli (strain AAC00-1)</name>
    <name type="common">Acidovorax citrulli</name>
    <dbReference type="NCBI Taxonomy" id="397945"/>
    <lineage>
        <taxon>Bacteria</taxon>
        <taxon>Pseudomonadati</taxon>
        <taxon>Pseudomonadota</taxon>
        <taxon>Betaproteobacteria</taxon>
        <taxon>Burkholderiales</taxon>
        <taxon>Comamonadaceae</taxon>
        <taxon>Paracidovorax</taxon>
    </lineage>
</organism>
<proteinExistence type="inferred from homology"/>
<comment type="function">
    <text evidence="1">Required for maturation of urease via the functional incorporation of the urease nickel metallocenter.</text>
</comment>
<comment type="subunit">
    <text evidence="1">UreD, UreF and UreG form a complex that acts as a GTP-hydrolysis-dependent molecular chaperone, activating the urease apoprotein by helping to assemble the nickel containing metallocenter of UreC. The UreE protein probably delivers the nickel.</text>
</comment>
<comment type="subcellular location">
    <subcellularLocation>
        <location evidence="1">Cytoplasm</location>
    </subcellularLocation>
</comment>
<comment type="similarity">
    <text evidence="1">Belongs to the UreF family.</text>
</comment>
<sequence>MAPAPDPAPAGSAAPDPASAPQGLPAASLLQLIWLASPALPVGGFSYSEGLEIAVECAGVTNESAAAAWLQEQLMLTQARGDLAVVHQALAAWRAGDAERVRALNDWVLHTRETSELRLQTEQMGRSLADWLRNQHAGDAEALSDVARLAALPPTYPVAFALAAARTQARAEDVLLACAFGWAENMVQAAIKAVPLGQSAGQRILARLAAAIPGAVAHAMQLGEAERQAFSPMLAVLSARHETQYSRLFRS</sequence>
<feature type="chain" id="PRO_0000344066" description="Urease accessory protein UreF">
    <location>
        <begin position="1"/>
        <end position="251"/>
    </location>
</feature>
<feature type="region of interest" description="Disordered" evidence="2">
    <location>
        <begin position="1"/>
        <end position="20"/>
    </location>
</feature>
<feature type="compositionally biased region" description="Low complexity" evidence="2">
    <location>
        <begin position="9"/>
        <end position="20"/>
    </location>
</feature>
<reference key="1">
    <citation type="submission" date="2006-12" db="EMBL/GenBank/DDBJ databases">
        <title>Complete sequence of Acidovorax avenae subsp. citrulli AAC00-1.</title>
        <authorList>
            <person name="Copeland A."/>
            <person name="Lucas S."/>
            <person name="Lapidus A."/>
            <person name="Barry K."/>
            <person name="Detter J.C."/>
            <person name="Glavina del Rio T."/>
            <person name="Dalin E."/>
            <person name="Tice H."/>
            <person name="Pitluck S."/>
            <person name="Kiss H."/>
            <person name="Brettin T."/>
            <person name="Bruce D."/>
            <person name="Han C."/>
            <person name="Tapia R."/>
            <person name="Gilna P."/>
            <person name="Schmutz J."/>
            <person name="Larimer F."/>
            <person name="Land M."/>
            <person name="Hauser L."/>
            <person name="Kyrpides N."/>
            <person name="Kim E."/>
            <person name="Stahl D."/>
            <person name="Richardson P."/>
        </authorList>
    </citation>
    <scope>NUCLEOTIDE SEQUENCE [LARGE SCALE GENOMIC DNA]</scope>
    <source>
        <strain>AAC00-1</strain>
    </source>
</reference>
<evidence type="ECO:0000255" key="1">
    <source>
        <dbReference type="HAMAP-Rule" id="MF_01385"/>
    </source>
</evidence>
<evidence type="ECO:0000256" key="2">
    <source>
        <dbReference type="SAM" id="MobiDB-lite"/>
    </source>
</evidence>
<accession>A1TSZ9</accession>
<keyword id="KW-0143">Chaperone</keyword>
<keyword id="KW-0963">Cytoplasm</keyword>
<keyword id="KW-0996">Nickel insertion</keyword>